<evidence type="ECO:0000250" key="1"/>
<evidence type="ECO:0000255" key="2">
    <source>
        <dbReference type="HAMAP-Rule" id="MF_00054"/>
    </source>
</evidence>
<feature type="initiator methionine" description="Removed" evidence="1">
    <location>
        <position position="1"/>
    </location>
</feature>
<feature type="chain" id="PRO_0000091222" description="Elongation factor G">
    <location>
        <begin position="2"/>
        <end position="693"/>
    </location>
</feature>
<feature type="domain" description="tr-type G">
    <location>
        <begin position="8"/>
        <end position="282"/>
    </location>
</feature>
<feature type="binding site" evidence="2">
    <location>
        <begin position="17"/>
        <end position="24"/>
    </location>
    <ligand>
        <name>GTP</name>
        <dbReference type="ChEBI" id="CHEBI:37565"/>
    </ligand>
</feature>
<feature type="binding site" evidence="2">
    <location>
        <begin position="81"/>
        <end position="85"/>
    </location>
    <ligand>
        <name>GTP</name>
        <dbReference type="ChEBI" id="CHEBI:37565"/>
    </ligand>
</feature>
<feature type="binding site" evidence="2">
    <location>
        <begin position="135"/>
        <end position="138"/>
    </location>
    <ligand>
        <name>GTP</name>
        <dbReference type="ChEBI" id="CHEBI:37565"/>
    </ligand>
</feature>
<keyword id="KW-0963">Cytoplasm</keyword>
<keyword id="KW-0251">Elongation factor</keyword>
<keyword id="KW-0342">GTP-binding</keyword>
<keyword id="KW-0547">Nucleotide-binding</keyword>
<keyword id="KW-0648">Protein biosynthesis</keyword>
<keyword id="KW-1185">Reference proteome</keyword>
<dbReference type="EMBL" id="CP000029">
    <property type="protein sequence ID" value="AAW53593.1"/>
    <property type="molecule type" value="Genomic_DNA"/>
</dbReference>
<dbReference type="RefSeq" id="WP_001832287.1">
    <property type="nucleotide sequence ID" value="NC_002976.3"/>
</dbReference>
<dbReference type="SMR" id="Q5HRK5"/>
<dbReference type="STRING" id="176279.SERP0188"/>
<dbReference type="GeneID" id="50019524"/>
<dbReference type="KEGG" id="ser:SERP0188"/>
<dbReference type="eggNOG" id="COG0480">
    <property type="taxonomic scope" value="Bacteria"/>
</dbReference>
<dbReference type="HOGENOM" id="CLU_002794_4_1_9"/>
<dbReference type="Proteomes" id="UP000000531">
    <property type="component" value="Chromosome"/>
</dbReference>
<dbReference type="GO" id="GO:0005737">
    <property type="term" value="C:cytoplasm"/>
    <property type="evidence" value="ECO:0007669"/>
    <property type="project" value="UniProtKB-SubCell"/>
</dbReference>
<dbReference type="GO" id="GO:0005525">
    <property type="term" value="F:GTP binding"/>
    <property type="evidence" value="ECO:0007669"/>
    <property type="project" value="UniProtKB-UniRule"/>
</dbReference>
<dbReference type="GO" id="GO:0003924">
    <property type="term" value="F:GTPase activity"/>
    <property type="evidence" value="ECO:0007669"/>
    <property type="project" value="InterPro"/>
</dbReference>
<dbReference type="GO" id="GO:0003746">
    <property type="term" value="F:translation elongation factor activity"/>
    <property type="evidence" value="ECO:0007669"/>
    <property type="project" value="UniProtKB-UniRule"/>
</dbReference>
<dbReference type="GO" id="GO:0032790">
    <property type="term" value="P:ribosome disassembly"/>
    <property type="evidence" value="ECO:0007669"/>
    <property type="project" value="TreeGrafter"/>
</dbReference>
<dbReference type="CDD" id="cd01886">
    <property type="entry name" value="EF-G"/>
    <property type="match status" value="1"/>
</dbReference>
<dbReference type="CDD" id="cd16262">
    <property type="entry name" value="EFG_III"/>
    <property type="match status" value="1"/>
</dbReference>
<dbReference type="CDD" id="cd01434">
    <property type="entry name" value="EFG_mtEFG1_IV"/>
    <property type="match status" value="1"/>
</dbReference>
<dbReference type="CDD" id="cd03713">
    <property type="entry name" value="EFG_mtEFG_C"/>
    <property type="match status" value="1"/>
</dbReference>
<dbReference type="CDD" id="cd04088">
    <property type="entry name" value="EFG_mtEFG_II"/>
    <property type="match status" value="1"/>
</dbReference>
<dbReference type="FunFam" id="2.40.30.10:FF:000006">
    <property type="entry name" value="Elongation factor G"/>
    <property type="match status" value="1"/>
</dbReference>
<dbReference type="FunFam" id="3.30.230.10:FF:000003">
    <property type="entry name" value="Elongation factor G"/>
    <property type="match status" value="1"/>
</dbReference>
<dbReference type="FunFam" id="3.30.70.240:FF:000001">
    <property type="entry name" value="Elongation factor G"/>
    <property type="match status" value="1"/>
</dbReference>
<dbReference type="FunFam" id="3.30.70.870:FF:000001">
    <property type="entry name" value="Elongation factor G"/>
    <property type="match status" value="1"/>
</dbReference>
<dbReference type="FunFam" id="3.40.50.300:FF:000029">
    <property type="entry name" value="Elongation factor G"/>
    <property type="match status" value="1"/>
</dbReference>
<dbReference type="Gene3D" id="3.30.230.10">
    <property type="match status" value="1"/>
</dbReference>
<dbReference type="Gene3D" id="3.30.70.240">
    <property type="match status" value="1"/>
</dbReference>
<dbReference type="Gene3D" id="3.30.70.870">
    <property type="entry name" value="Elongation Factor G (Translational Gtpase), domain 3"/>
    <property type="match status" value="1"/>
</dbReference>
<dbReference type="Gene3D" id="3.40.50.300">
    <property type="entry name" value="P-loop containing nucleotide triphosphate hydrolases"/>
    <property type="match status" value="1"/>
</dbReference>
<dbReference type="Gene3D" id="2.40.30.10">
    <property type="entry name" value="Translation factors"/>
    <property type="match status" value="1"/>
</dbReference>
<dbReference type="HAMAP" id="MF_00054_B">
    <property type="entry name" value="EF_G_EF_2_B"/>
    <property type="match status" value="1"/>
</dbReference>
<dbReference type="InterPro" id="IPR053905">
    <property type="entry name" value="EF-G-like_DII"/>
</dbReference>
<dbReference type="InterPro" id="IPR041095">
    <property type="entry name" value="EFG_II"/>
</dbReference>
<dbReference type="InterPro" id="IPR009022">
    <property type="entry name" value="EFG_III"/>
</dbReference>
<dbReference type="InterPro" id="IPR035647">
    <property type="entry name" value="EFG_III/V"/>
</dbReference>
<dbReference type="InterPro" id="IPR047872">
    <property type="entry name" value="EFG_IV"/>
</dbReference>
<dbReference type="InterPro" id="IPR035649">
    <property type="entry name" value="EFG_V"/>
</dbReference>
<dbReference type="InterPro" id="IPR000640">
    <property type="entry name" value="EFG_V-like"/>
</dbReference>
<dbReference type="InterPro" id="IPR031157">
    <property type="entry name" value="G_TR_CS"/>
</dbReference>
<dbReference type="InterPro" id="IPR027417">
    <property type="entry name" value="P-loop_NTPase"/>
</dbReference>
<dbReference type="InterPro" id="IPR020568">
    <property type="entry name" value="Ribosomal_Su5_D2-typ_SF"/>
</dbReference>
<dbReference type="InterPro" id="IPR014721">
    <property type="entry name" value="Ribsml_uS5_D2-typ_fold_subgr"/>
</dbReference>
<dbReference type="InterPro" id="IPR005225">
    <property type="entry name" value="Small_GTP-bd"/>
</dbReference>
<dbReference type="InterPro" id="IPR000795">
    <property type="entry name" value="T_Tr_GTP-bd_dom"/>
</dbReference>
<dbReference type="InterPro" id="IPR009000">
    <property type="entry name" value="Transl_B-barrel_sf"/>
</dbReference>
<dbReference type="InterPro" id="IPR004540">
    <property type="entry name" value="Transl_elong_EFG/EF2"/>
</dbReference>
<dbReference type="InterPro" id="IPR005517">
    <property type="entry name" value="Transl_elong_EFG/EF2_IV"/>
</dbReference>
<dbReference type="NCBIfam" id="TIGR00484">
    <property type="entry name" value="EF-G"/>
    <property type="match status" value="1"/>
</dbReference>
<dbReference type="NCBIfam" id="NF009379">
    <property type="entry name" value="PRK12740.1-3"/>
    <property type="match status" value="1"/>
</dbReference>
<dbReference type="NCBIfam" id="NF009381">
    <property type="entry name" value="PRK12740.1-5"/>
    <property type="match status" value="1"/>
</dbReference>
<dbReference type="NCBIfam" id="TIGR00231">
    <property type="entry name" value="small_GTP"/>
    <property type="match status" value="1"/>
</dbReference>
<dbReference type="PANTHER" id="PTHR43261:SF1">
    <property type="entry name" value="RIBOSOME-RELEASING FACTOR 2, MITOCHONDRIAL"/>
    <property type="match status" value="1"/>
</dbReference>
<dbReference type="PANTHER" id="PTHR43261">
    <property type="entry name" value="TRANSLATION ELONGATION FACTOR G-RELATED"/>
    <property type="match status" value="1"/>
</dbReference>
<dbReference type="Pfam" id="PF22042">
    <property type="entry name" value="EF-G_D2"/>
    <property type="match status" value="1"/>
</dbReference>
<dbReference type="Pfam" id="PF00679">
    <property type="entry name" value="EFG_C"/>
    <property type="match status" value="1"/>
</dbReference>
<dbReference type="Pfam" id="PF14492">
    <property type="entry name" value="EFG_III"/>
    <property type="match status" value="1"/>
</dbReference>
<dbReference type="Pfam" id="PF03764">
    <property type="entry name" value="EFG_IV"/>
    <property type="match status" value="1"/>
</dbReference>
<dbReference type="Pfam" id="PF00009">
    <property type="entry name" value="GTP_EFTU"/>
    <property type="match status" value="1"/>
</dbReference>
<dbReference type="PRINTS" id="PR00315">
    <property type="entry name" value="ELONGATNFCT"/>
</dbReference>
<dbReference type="SMART" id="SM00838">
    <property type="entry name" value="EFG_C"/>
    <property type="match status" value="1"/>
</dbReference>
<dbReference type="SMART" id="SM00889">
    <property type="entry name" value="EFG_IV"/>
    <property type="match status" value="1"/>
</dbReference>
<dbReference type="SUPFAM" id="SSF54980">
    <property type="entry name" value="EF-G C-terminal domain-like"/>
    <property type="match status" value="2"/>
</dbReference>
<dbReference type="SUPFAM" id="SSF52540">
    <property type="entry name" value="P-loop containing nucleoside triphosphate hydrolases"/>
    <property type="match status" value="1"/>
</dbReference>
<dbReference type="SUPFAM" id="SSF54211">
    <property type="entry name" value="Ribosomal protein S5 domain 2-like"/>
    <property type="match status" value="1"/>
</dbReference>
<dbReference type="SUPFAM" id="SSF50447">
    <property type="entry name" value="Translation proteins"/>
    <property type="match status" value="1"/>
</dbReference>
<dbReference type="PROSITE" id="PS00301">
    <property type="entry name" value="G_TR_1"/>
    <property type="match status" value="1"/>
</dbReference>
<dbReference type="PROSITE" id="PS51722">
    <property type="entry name" value="G_TR_2"/>
    <property type="match status" value="1"/>
</dbReference>
<comment type="function">
    <text evidence="2">Catalyzes the GTP-dependent ribosomal translocation step during translation elongation. During this step, the ribosome changes from the pre-translocational (PRE) to the post-translocational (POST) state as the newly formed A-site-bound peptidyl-tRNA and P-site-bound deacylated tRNA move to the P and E sites, respectively. Catalyzes the coordinated movement of the two tRNA molecules, the mRNA and conformational changes in the ribosome.</text>
</comment>
<comment type="subcellular location">
    <subcellularLocation>
        <location evidence="2">Cytoplasm</location>
    </subcellularLocation>
</comment>
<comment type="similarity">
    <text evidence="2">Belongs to the TRAFAC class translation factor GTPase superfamily. Classic translation factor GTPase family. EF-G/EF-2 subfamily.</text>
</comment>
<name>EFG_STAEQ</name>
<proteinExistence type="inferred from homology"/>
<reference key="1">
    <citation type="journal article" date="2005" name="J. Bacteriol.">
        <title>Insights on evolution of virulence and resistance from the complete genome analysis of an early methicillin-resistant Staphylococcus aureus strain and a biofilm-producing methicillin-resistant Staphylococcus epidermidis strain.</title>
        <authorList>
            <person name="Gill S.R."/>
            <person name="Fouts D.E."/>
            <person name="Archer G.L."/>
            <person name="Mongodin E.F."/>
            <person name="DeBoy R.T."/>
            <person name="Ravel J."/>
            <person name="Paulsen I.T."/>
            <person name="Kolonay J.F."/>
            <person name="Brinkac L.M."/>
            <person name="Beanan M.J."/>
            <person name="Dodson R.J."/>
            <person name="Daugherty S.C."/>
            <person name="Madupu R."/>
            <person name="Angiuoli S.V."/>
            <person name="Durkin A.S."/>
            <person name="Haft D.H."/>
            <person name="Vamathevan J.J."/>
            <person name="Khouri H."/>
            <person name="Utterback T.R."/>
            <person name="Lee C."/>
            <person name="Dimitrov G."/>
            <person name="Jiang L."/>
            <person name="Qin H."/>
            <person name="Weidman J."/>
            <person name="Tran K."/>
            <person name="Kang K.H."/>
            <person name="Hance I.R."/>
            <person name="Nelson K.E."/>
            <person name="Fraser C.M."/>
        </authorList>
    </citation>
    <scope>NUCLEOTIDE SEQUENCE [LARGE SCALE GENOMIC DNA]</scope>
    <source>
        <strain>ATCC 35984 / DSM 28319 / BCRC 17069 / CCUG 31568 / BM 3577 / RP62A</strain>
    </source>
</reference>
<protein>
    <recommendedName>
        <fullName evidence="2">Elongation factor G</fullName>
        <shortName evidence="2">EF-G</shortName>
    </recommendedName>
</protein>
<sequence length="693" mass="76877">MARDFSLKNTRNIGIMAHIDAGKTTTTERILYYTGRIHKIGETHEGASQMDWMEQEQDRGITITSAATTAQWQGHRVNIIDTPGHVDFTVEVERSLRVLDGAVTVLDAQSGVEPQTETVWRQATTYGVPRIVFVNKMDKLGANFEYSVSTLHDRLQANAAPIQLPIGAEDEFEAIIDLVEMKCFKYTNDLGTEIDEIEIPEDHKERAEEARAQLIEAVAENNDDLMEKYLGDEEISVDELKDAIRQATTDVEFYPVLCGTAFKNKGVQLMLNAVIDYLPSPLDVKPIIGHRANNPDEEVVAKPDDSAEFAALAFKVMTDPYVGKLTFFRVYSGTLSSGSYVKNSSKDKRERVGRLLQMHANSRQEIDTVYSGEIAAAVGLKETGTGDTLCGEKNDIILESMEFPEPVIHLSVEPKSKADQDKMTQALVKLQEEDPTFHAHTDEETGQVIIGGMGELHLDILVDRMKKEFNVECNVGAPMVSYRETFKQPAQVQGKFSRQSGGRGQYGDVHIEFTPNETGGGFEFENAIVGGVVPREYIPSVEQGLKDAMENGVLAGYPLIDVKAKLFDGSYHDVDSSEMAFKIAASLALKEAAKKCDPVILEPMMKVTIEMPEEYMGDIMGDVTARRGRVDGMEPRGNAQVVNAYVPLSEMFGYATSLRSNTQGRGTYTMYFDHYAEVPKSIAEEIIKKNKGE</sequence>
<organism>
    <name type="scientific">Staphylococcus epidermidis (strain ATCC 35984 / DSM 28319 / BCRC 17069 / CCUG 31568 / BM 3577 / RP62A)</name>
    <dbReference type="NCBI Taxonomy" id="176279"/>
    <lineage>
        <taxon>Bacteria</taxon>
        <taxon>Bacillati</taxon>
        <taxon>Bacillota</taxon>
        <taxon>Bacilli</taxon>
        <taxon>Bacillales</taxon>
        <taxon>Staphylococcaceae</taxon>
        <taxon>Staphylococcus</taxon>
    </lineage>
</organism>
<accession>Q5HRK5</accession>
<gene>
    <name evidence="2" type="primary">fusA</name>
    <name type="ordered locus">SERP0188</name>
</gene>